<organism>
    <name type="scientific">Phaeosphaeria nodorum (strain SN15 / ATCC MYA-4574 / FGSC 10173)</name>
    <name type="common">Glume blotch fungus</name>
    <name type="synonym">Parastagonospora nodorum</name>
    <dbReference type="NCBI Taxonomy" id="321614"/>
    <lineage>
        <taxon>Eukaryota</taxon>
        <taxon>Fungi</taxon>
        <taxon>Dikarya</taxon>
        <taxon>Ascomycota</taxon>
        <taxon>Pezizomycotina</taxon>
        <taxon>Dothideomycetes</taxon>
        <taxon>Pleosporomycetidae</taxon>
        <taxon>Pleosporales</taxon>
        <taxon>Pleosporineae</taxon>
        <taxon>Phaeosphaeriaceae</taxon>
        <taxon>Parastagonospora</taxon>
    </lineage>
</organism>
<evidence type="ECO:0000250" key="1"/>
<evidence type="ECO:0000255" key="2"/>
<evidence type="ECO:0000256" key="3">
    <source>
        <dbReference type="SAM" id="MobiDB-lite"/>
    </source>
</evidence>
<evidence type="ECO:0000305" key="4"/>
<sequence length="250" mass="27850">MRPGAASIRTTGSVLAFLVPSAQCMRSAPAARFSTSPIRCKKDNNSNRGVSAVRGTGLRKRQTLSVLSKKGSGDQPPKPVPITEKVTGTPDHGLWDFFKDKKLIQTPVDESRHGRAWTVGELRNQDWDALHQLWWVCVKERNRLATEKIERARLDAGYGDQENKDRDTVVQETMKAILDTLSERHQAYMEAVELAKQDPSIDLSRTDGPQFVEPAYEGVTCRVAEYTLESFGHVGVGQHLLSEGWHIVTA</sequence>
<name>RM04_PHANO</name>
<gene>
    <name type="primary">MRPL4</name>
    <name type="ORF">SNOG_12615</name>
</gene>
<dbReference type="EMBL" id="CH445347">
    <property type="protein sequence ID" value="EAT79913.2"/>
    <property type="molecule type" value="Genomic_DNA"/>
</dbReference>
<dbReference type="RefSeq" id="XP_001802836.1">
    <property type="nucleotide sequence ID" value="XM_001802784.1"/>
</dbReference>
<dbReference type="SMR" id="Q0U6J9"/>
<dbReference type="STRING" id="321614.Q0U6J9"/>
<dbReference type="EnsemblFungi" id="SNOT_12615">
    <property type="protein sequence ID" value="SNOT_12615"/>
    <property type="gene ID" value="SNOG_12615"/>
</dbReference>
<dbReference type="GeneID" id="5979747"/>
<dbReference type="KEGG" id="pno:SNOG_12615"/>
<dbReference type="VEuPathDB" id="FungiDB:JI435_126150"/>
<dbReference type="eggNOG" id="KOG3331">
    <property type="taxonomic scope" value="Eukaryota"/>
</dbReference>
<dbReference type="HOGENOM" id="CLU_063281_1_0_1"/>
<dbReference type="InParanoid" id="Q0U6J9"/>
<dbReference type="Proteomes" id="UP000001055">
    <property type="component" value="Unassembled WGS sequence"/>
</dbReference>
<dbReference type="GO" id="GO:0005762">
    <property type="term" value="C:mitochondrial large ribosomal subunit"/>
    <property type="evidence" value="ECO:0000318"/>
    <property type="project" value="GO_Central"/>
</dbReference>
<dbReference type="GO" id="GO:0003735">
    <property type="term" value="F:structural constituent of ribosome"/>
    <property type="evidence" value="ECO:0000318"/>
    <property type="project" value="GO_Central"/>
</dbReference>
<dbReference type="GO" id="GO:0032543">
    <property type="term" value="P:mitochondrial translation"/>
    <property type="evidence" value="ECO:0000318"/>
    <property type="project" value="GO_Central"/>
</dbReference>
<dbReference type="Gene3D" id="6.10.330.20">
    <property type="match status" value="1"/>
</dbReference>
<dbReference type="InterPro" id="IPR038340">
    <property type="entry name" value="MRP-L47_sf"/>
</dbReference>
<dbReference type="InterPro" id="IPR010729">
    <property type="entry name" value="Ribosomal_uL29_mit"/>
</dbReference>
<dbReference type="PANTHER" id="PTHR21183:SF18">
    <property type="entry name" value="LARGE RIBOSOMAL SUBUNIT PROTEIN UL29M"/>
    <property type="match status" value="1"/>
</dbReference>
<dbReference type="PANTHER" id="PTHR21183">
    <property type="entry name" value="RIBOSOMAL PROTEIN L47, MITOCHONDRIAL-RELATED"/>
    <property type="match status" value="1"/>
</dbReference>
<dbReference type="Pfam" id="PF06984">
    <property type="entry name" value="MRP-L47"/>
    <property type="match status" value="1"/>
</dbReference>
<comment type="subunit">
    <text evidence="1">Component of the mitochondrial large ribosomal subunit. Mature mitochondrial ribosomes consist of a small (37S) and a large (54S) subunit. The 37S subunit contains at least 33 different proteins and 1 molecule of RNA (15S). The 54S subunit contains at least 45 different proteins and 1 molecule of RNA (21S) (By similarity).</text>
</comment>
<comment type="subcellular location">
    <subcellularLocation>
        <location evidence="1">Mitochondrion</location>
    </subcellularLocation>
</comment>
<comment type="similarity">
    <text evidence="4">Belongs to the universal ribosomal protein uL29 family.</text>
</comment>
<feature type="transit peptide" description="Mitochondrion" evidence="2">
    <location>
        <begin position="1"/>
        <end position="24"/>
    </location>
</feature>
<feature type="chain" id="PRO_0000372408" description="Large ribosomal subunit protein uL29m">
    <location>
        <begin position="25"/>
        <end position="250"/>
    </location>
</feature>
<feature type="region of interest" description="Disordered" evidence="3">
    <location>
        <begin position="66"/>
        <end position="86"/>
    </location>
</feature>
<proteinExistence type="inferred from homology"/>
<reference key="1">
    <citation type="journal article" date="2007" name="Plant Cell">
        <title>Dothideomycete-plant interactions illuminated by genome sequencing and EST analysis of the wheat pathogen Stagonospora nodorum.</title>
        <authorList>
            <person name="Hane J.K."/>
            <person name="Lowe R.G.T."/>
            <person name="Solomon P.S."/>
            <person name="Tan K.-C."/>
            <person name="Schoch C.L."/>
            <person name="Spatafora J.W."/>
            <person name="Crous P.W."/>
            <person name="Kodira C.D."/>
            <person name="Birren B.W."/>
            <person name="Galagan J.E."/>
            <person name="Torriani S.F.F."/>
            <person name="McDonald B.A."/>
            <person name="Oliver R.P."/>
        </authorList>
    </citation>
    <scope>NUCLEOTIDE SEQUENCE [LARGE SCALE GENOMIC DNA]</scope>
    <source>
        <strain>SN15 / ATCC MYA-4574 / FGSC 10173</strain>
    </source>
</reference>
<keyword id="KW-0496">Mitochondrion</keyword>
<keyword id="KW-0687">Ribonucleoprotein</keyword>
<keyword id="KW-0689">Ribosomal protein</keyword>
<keyword id="KW-0809">Transit peptide</keyword>
<accession>Q0U6J9</accession>
<protein>
    <recommendedName>
        <fullName evidence="4">Large ribosomal subunit protein uL29m</fullName>
    </recommendedName>
    <alternativeName>
        <fullName>54S ribosomal protein L4, mitochondrial</fullName>
    </alternativeName>
</protein>